<gene>
    <name evidence="1" type="primary">glsA</name>
    <name type="ordered locus">PSEEN3312</name>
</gene>
<name>GLSA_PSEE4</name>
<proteinExistence type="inferred from homology"/>
<reference key="1">
    <citation type="journal article" date="2006" name="Nat. Biotechnol.">
        <title>Complete genome sequence of the entomopathogenic and metabolically versatile soil bacterium Pseudomonas entomophila.</title>
        <authorList>
            <person name="Vodovar N."/>
            <person name="Vallenet D."/>
            <person name="Cruveiller S."/>
            <person name="Rouy Z."/>
            <person name="Barbe V."/>
            <person name="Acosta C."/>
            <person name="Cattolico L."/>
            <person name="Jubin C."/>
            <person name="Lajus A."/>
            <person name="Segurens B."/>
            <person name="Vacherie B."/>
            <person name="Wincker P."/>
            <person name="Weissenbach J."/>
            <person name="Lemaitre B."/>
            <person name="Medigue C."/>
            <person name="Boccard F."/>
        </authorList>
    </citation>
    <scope>NUCLEOTIDE SEQUENCE [LARGE SCALE GENOMIC DNA]</scope>
    <source>
        <strain>L48</strain>
    </source>
</reference>
<dbReference type="EC" id="3.5.1.2" evidence="1"/>
<dbReference type="EMBL" id="CT573326">
    <property type="protein sequence ID" value="CAK16066.1"/>
    <property type="molecule type" value="Genomic_DNA"/>
</dbReference>
<dbReference type="RefSeq" id="WP_011534453.1">
    <property type="nucleotide sequence ID" value="NC_008027.1"/>
</dbReference>
<dbReference type="SMR" id="Q1I8G2"/>
<dbReference type="STRING" id="384676.PSEEN3312"/>
<dbReference type="GeneID" id="32806399"/>
<dbReference type="KEGG" id="pen:PSEEN3312"/>
<dbReference type="eggNOG" id="COG2066">
    <property type="taxonomic scope" value="Bacteria"/>
</dbReference>
<dbReference type="HOGENOM" id="CLU_027932_1_1_6"/>
<dbReference type="OrthoDB" id="9788822at2"/>
<dbReference type="Proteomes" id="UP000000658">
    <property type="component" value="Chromosome"/>
</dbReference>
<dbReference type="GO" id="GO:0004359">
    <property type="term" value="F:glutaminase activity"/>
    <property type="evidence" value="ECO:0007669"/>
    <property type="project" value="UniProtKB-UniRule"/>
</dbReference>
<dbReference type="GO" id="GO:0006537">
    <property type="term" value="P:glutamate biosynthetic process"/>
    <property type="evidence" value="ECO:0007669"/>
    <property type="project" value="TreeGrafter"/>
</dbReference>
<dbReference type="GO" id="GO:0006543">
    <property type="term" value="P:glutamine catabolic process"/>
    <property type="evidence" value="ECO:0007669"/>
    <property type="project" value="TreeGrafter"/>
</dbReference>
<dbReference type="FunFam" id="3.40.710.10:FF:000005">
    <property type="entry name" value="Glutaminase"/>
    <property type="match status" value="1"/>
</dbReference>
<dbReference type="Gene3D" id="3.40.710.10">
    <property type="entry name" value="DD-peptidase/beta-lactamase superfamily"/>
    <property type="match status" value="1"/>
</dbReference>
<dbReference type="HAMAP" id="MF_00313">
    <property type="entry name" value="Glutaminase"/>
    <property type="match status" value="1"/>
</dbReference>
<dbReference type="InterPro" id="IPR012338">
    <property type="entry name" value="Beta-lactam/transpept-like"/>
</dbReference>
<dbReference type="InterPro" id="IPR015868">
    <property type="entry name" value="Glutaminase"/>
</dbReference>
<dbReference type="NCBIfam" id="TIGR03814">
    <property type="entry name" value="Gln_ase"/>
    <property type="match status" value="1"/>
</dbReference>
<dbReference type="NCBIfam" id="NF002132">
    <property type="entry name" value="PRK00971.1-1"/>
    <property type="match status" value="1"/>
</dbReference>
<dbReference type="NCBIfam" id="NF002133">
    <property type="entry name" value="PRK00971.1-2"/>
    <property type="match status" value="1"/>
</dbReference>
<dbReference type="PANTHER" id="PTHR12544">
    <property type="entry name" value="GLUTAMINASE"/>
    <property type="match status" value="1"/>
</dbReference>
<dbReference type="PANTHER" id="PTHR12544:SF29">
    <property type="entry name" value="GLUTAMINASE"/>
    <property type="match status" value="1"/>
</dbReference>
<dbReference type="Pfam" id="PF04960">
    <property type="entry name" value="Glutaminase"/>
    <property type="match status" value="1"/>
</dbReference>
<dbReference type="SUPFAM" id="SSF56601">
    <property type="entry name" value="beta-lactamase/transpeptidase-like"/>
    <property type="match status" value="1"/>
</dbReference>
<accession>Q1I8G2</accession>
<keyword id="KW-0378">Hydrolase</keyword>
<feature type="chain" id="PRO_1000048342" description="Glutaminase">
    <location>
        <begin position="1"/>
        <end position="306"/>
    </location>
</feature>
<feature type="binding site" evidence="1">
    <location>
        <position position="61"/>
    </location>
    <ligand>
        <name>substrate</name>
    </ligand>
</feature>
<feature type="binding site" evidence="1">
    <location>
        <position position="111"/>
    </location>
    <ligand>
        <name>substrate</name>
    </ligand>
</feature>
<feature type="binding site" evidence="1">
    <location>
        <position position="155"/>
    </location>
    <ligand>
        <name>substrate</name>
    </ligand>
</feature>
<feature type="binding site" evidence="1">
    <location>
        <position position="162"/>
    </location>
    <ligand>
        <name>substrate</name>
    </ligand>
</feature>
<feature type="binding site" evidence="1">
    <location>
        <position position="186"/>
    </location>
    <ligand>
        <name>substrate</name>
    </ligand>
</feature>
<feature type="binding site" evidence="1">
    <location>
        <position position="238"/>
    </location>
    <ligand>
        <name>substrate</name>
    </ligand>
</feature>
<feature type="binding site" evidence="1">
    <location>
        <position position="256"/>
    </location>
    <ligand>
        <name>substrate</name>
    </ligand>
</feature>
<evidence type="ECO:0000255" key="1">
    <source>
        <dbReference type="HAMAP-Rule" id="MF_00313"/>
    </source>
</evidence>
<comment type="catalytic activity">
    <reaction evidence="1">
        <text>L-glutamine + H2O = L-glutamate + NH4(+)</text>
        <dbReference type="Rhea" id="RHEA:15889"/>
        <dbReference type="ChEBI" id="CHEBI:15377"/>
        <dbReference type="ChEBI" id="CHEBI:28938"/>
        <dbReference type="ChEBI" id="CHEBI:29985"/>
        <dbReference type="ChEBI" id="CHEBI:58359"/>
        <dbReference type="EC" id="3.5.1.2"/>
    </reaction>
</comment>
<comment type="subunit">
    <text evidence="1">Homotetramer.</text>
</comment>
<comment type="similarity">
    <text evidence="1">Belongs to the glutaminase family.</text>
</comment>
<organism>
    <name type="scientific">Pseudomonas entomophila (strain L48)</name>
    <dbReference type="NCBI Taxonomy" id="384676"/>
    <lineage>
        <taxon>Bacteria</taxon>
        <taxon>Pseudomonadati</taxon>
        <taxon>Pseudomonadota</taxon>
        <taxon>Gammaproteobacteria</taxon>
        <taxon>Pseudomonadales</taxon>
        <taxon>Pseudomonadaceae</taxon>
        <taxon>Pseudomonas</taxon>
    </lineage>
</organism>
<protein>
    <recommendedName>
        <fullName evidence="1">Glutaminase</fullName>
        <ecNumber evidence="1">3.5.1.2</ecNumber>
    </recommendedName>
</protein>
<sequence length="306" mass="32882">MQALLQEILDHVHPLLAQGQVAQYIPALAQVDPNQLGIAVQSLDGQLHCAGDAHTPFSIQSISKVFSLVQAINHSGEDIWSRLGYEPSGQAFNSLVQLEVEKGRPRNPFINAGALVICDINQSRYATPTLSMRDFVRRLSANPRIVSDAVVAESEYEHRARNAAMAYLMQAFGNFHNDVDAVLRSYFHHCALSMSCVDVARGFAFLANGGLCPHSGEQVLSRRQAQQVNAIMATSGLYDEAGNFAYRVGLPGKSGVGGGIVAVVPGRYSICVWSPALNASGNSLAGLRALELLSERMTGSVFSAIS</sequence>